<keyword id="KW-1185">Reference proteome</keyword>
<keyword id="KW-0687">Ribonucleoprotein</keyword>
<keyword id="KW-0689">Ribosomal protein</keyword>
<keyword id="KW-0694">RNA-binding</keyword>
<keyword id="KW-0699">rRNA-binding</keyword>
<name>RS11_NOSS1</name>
<reference key="1">
    <citation type="journal article" date="2001" name="DNA Res.">
        <title>Complete genomic sequence of the filamentous nitrogen-fixing cyanobacterium Anabaena sp. strain PCC 7120.</title>
        <authorList>
            <person name="Kaneko T."/>
            <person name="Nakamura Y."/>
            <person name="Wolk C.P."/>
            <person name="Kuritz T."/>
            <person name="Sasamoto S."/>
            <person name="Watanabe A."/>
            <person name="Iriguchi M."/>
            <person name="Ishikawa A."/>
            <person name="Kawashima K."/>
            <person name="Kimura T."/>
            <person name="Kishida Y."/>
            <person name="Kohara M."/>
            <person name="Matsumoto M."/>
            <person name="Matsuno A."/>
            <person name="Muraki A."/>
            <person name="Nakazaki N."/>
            <person name="Shimpo S."/>
            <person name="Sugimoto M."/>
            <person name="Takazawa M."/>
            <person name="Yamada M."/>
            <person name="Yasuda M."/>
            <person name="Tabata S."/>
        </authorList>
    </citation>
    <scope>NUCLEOTIDE SEQUENCE [LARGE SCALE GENOMIC DNA]</scope>
    <source>
        <strain>PCC 7120 / SAG 25.82 / UTEX 2576</strain>
    </source>
</reference>
<feature type="chain" id="PRO_0000123094" description="Small ribosomal subunit protein uS11">
    <location>
        <begin position="1"/>
        <end position="131"/>
    </location>
</feature>
<dbReference type="EMBL" id="BA000019">
    <property type="protein sequence ID" value="BAB75891.1"/>
    <property type="molecule type" value="Genomic_DNA"/>
</dbReference>
<dbReference type="PIR" id="AI2329">
    <property type="entry name" value="AI2329"/>
</dbReference>
<dbReference type="RefSeq" id="WP_010998331.1">
    <property type="nucleotide sequence ID" value="NZ_RSCN01000010.1"/>
</dbReference>
<dbReference type="SMR" id="Q8YPK2"/>
<dbReference type="STRING" id="103690.gene:10496241"/>
<dbReference type="GeneID" id="58723372"/>
<dbReference type="KEGG" id="ana:all4192"/>
<dbReference type="eggNOG" id="COG0100">
    <property type="taxonomic scope" value="Bacteria"/>
</dbReference>
<dbReference type="OrthoDB" id="9806415at2"/>
<dbReference type="Proteomes" id="UP000002483">
    <property type="component" value="Chromosome"/>
</dbReference>
<dbReference type="GO" id="GO:1990904">
    <property type="term" value="C:ribonucleoprotein complex"/>
    <property type="evidence" value="ECO:0007669"/>
    <property type="project" value="UniProtKB-KW"/>
</dbReference>
<dbReference type="GO" id="GO:0005840">
    <property type="term" value="C:ribosome"/>
    <property type="evidence" value="ECO:0007669"/>
    <property type="project" value="UniProtKB-KW"/>
</dbReference>
<dbReference type="GO" id="GO:0019843">
    <property type="term" value="F:rRNA binding"/>
    <property type="evidence" value="ECO:0007669"/>
    <property type="project" value="UniProtKB-UniRule"/>
</dbReference>
<dbReference type="GO" id="GO:0003735">
    <property type="term" value="F:structural constituent of ribosome"/>
    <property type="evidence" value="ECO:0007669"/>
    <property type="project" value="InterPro"/>
</dbReference>
<dbReference type="GO" id="GO:0006412">
    <property type="term" value="P:translation"/>
    <property type="evidence" value="ECO:0007669"/>
    <property type="project" value="UniProtKB-UniRule"/>
</dbReference>
<dbReference type="FunFam" id="3.30.420.80:FF:000001">
    <property type="entry name" value="30S ribosomal protein S11"/>
    <property type="match status" value="1"/>
</dbReference>
<dbReference type="Gene3D" id="3.30.420.80">
    <property type="entry name" value="Ribosomal protein S11"/>
    <property type="match status" value="1"/>
</dbReference>
<dbReference type="HAMAP" id="MF_01310">
    <property type="entry name" value="Ribosomal_uS11"/>
    <property type="match status" value="1"/>
</dbReference>
<dbReference type="InterPro" id="IPR001971">
    <property type="entry name" value="Ribosomal_uS11"/>
</dbReference>
<dbReference type="InterPro" id="IPR019981">
    <property type="entry name" value="Ribosomal_uS11_bac-type"/>
</dbReference>
<dbReference type="InterPro" id="IPR018102">
    <property type="entry name" value="Ribosomal_uS11_CS"/>
</dbReference>
<dbReference type="InterPro" id="IPR036967">
    <property type="entry name" value="Ribosomal_uS11_sf"/>
</dbReference>
<dbReference type="NCBIfam" id="NF003698">
    <property type="entry name" value="PRK05309.1"/>
    <property type="match status" value="1"/>
</dbReference>
<dbReference type="NCBIfam" id="TIGR03632">
    <property type="entry name" value="uS11_bact"/>
    <property type="match status" value="1"/>
</dbReference>
<dbReference type="PANTHER" id="PTHR11759">
    <property type="entry name" value="40S RIBOSOMAL PROTEIN S14/30S RIBOSOMAL PROTEIN S11"/>
    <property type="match status" value="1"/>
</dbReference>
<dbReference type="Pfam" id="PF00411">
    <property type="entry name" value="Ribosomal_S11"/>
    <property type="match status" value="1"/>
</dbReference>
<dbReference type="PIRSF" id="PIRSF002131">
    <property type="entry name" value="Ribosomal_S11"/>
    <property type="match status" value="1"/>
</dbReference>
<dbReference type="SUPFAM" id="SSF53137">
    <property type="entry name" value="Translational machinery components"/>
    <property type="match status" value="1"/>
</dbReference>
<dbReference type="PROSITE" id="PS00054">
    <property type="entry name" value="RIBOSOMAL_S11"/>
    <property type="match status" value="1"/>
</dbReference>
<proteinExistence type="inferred from homology"/>
<evidence type="ECO:0000255" key="1">
    <source>
        <dbReference type="HAMAP-Rule" id="MF_01310"/>
    </source>
</evidence>
<evidence type="ECO:0000305" key="2"/>
<accession>Q8YPK2</accession>
<sequence length="131" mass="13961">MARQPTKKSGSKKQKRNVPNGMAYIQSTFNNSIVTITDQNGDVISWASAGSSGFKGAKKGTPFAAQTAAESAARRAIDQGMRQIEVMVSGPGAGRETAIRALQGAGLEITLIRDITPIPHNGCRPPKRRRV</sequence>
<organism>
    <name type="scientific">Nostoc sp. (strain PCC 7120 / SAG 25.82 / UTEX 2576)</name>
    <dbReference type="NCBI Taxonomy" id="103690"/>
    <lineage>
        <taxon>Bacteria</taxon>
        <taxon>Bacillati</taxon>
        <taxon>Cyanobacteriota</taxon>
        <taxon>Cyanophyceae</taxon>
        <taxon>Nostocales</taxon>
        <taxon>Nostocaceae</taxon>
        <taxon>Nostoc</taxon>
    </lineage>
</organism>
<protein>
    <recommendedName>
        <fullName evidence="1">Small ribosomal subunit protein uS11</fullName>
    </recommendedName>
    <alternativeName>
        <fullName evidence="2">30S ribosomal protein S11</fullName>
    </alternativeName>
</protein>
<gene>
    <name evidence="1" type="primary">rpsK</name>
    <name evidence="1" type="synonym">rps11</name>
    <name type="ordered locus">all4192</name>
</gene>
<comment type="function">
    <text evidence="1">Located on the platform of the 30S subunit, it bridges several disparate RNA helices of the 16S rRNA. Forms part of the Shine-Dalgarno cleft in the 70S ribosome.</text>
</comment>
<comment type="subunit">
    <text evidence="1">Part of the 30S ribosomal subunit. Interacts with proteins S7 and S18. Binds to IF-3.</text>
</comment>
<comment type="similarity">
    <text evidence="1">Belongs to the universal ribosomal protein uS11 family.</text>
</comment>